<gene>
    <name evidence="1" type="primary">uvrA</name>
    <name type="ordered locus">BAB1_1128</name>
</gene>
<proteinExistence type="inferred from homology"/>
<dbReference type="EMBL" id="AM040264">
    <property type="protein sequence ID" value="CAJ11084.1"/>
    <property type="molecule type" value="Genomic_DNA"/>
</dbReference>
<dbReference type="EMBL" id="L10843">
    <property type="protein sequence ID" value="AAA16817.1"/>
    <property type="molecule type" value="Unassigned_DNA"/>
</dbReference>
<dbReference type="PIR" id="I40351">
    <property type="entry name" value="I40351"/>
</dbReference>
<dbReference type="RefSeq" id="WP_002964233.1">
    <property type="nucleotide sequence ID" value="NZ_KN046823.1"/>
</dbReference>
<dbReference type="SMR" id="Q2YPX5"/>
<dbReference type="STRING" id="359391.BAB1_1128"/>
<dbReference type="GeneID" id="93016556"/>
<dbReference type="KEGG" id="bmf:BAB1_1128"/>
<dbReference type="PATRIC" id="fig|359391.11.peg.28"/>
<dbReference type="HOGENOM" id="CLU_001370_0_1_5"/>
<dbReference type="PhylomeDB" id="Q2YPX5"/>
<dbReference type="PRO" id="PR:Q2YPX5"/>
<dbReference type="Proteomes" id="UP000002719">
    <property type="component" value="Chromosome I"/>
</dbReference>
<dbReference type="GO" id="GO:0005737">
    <property type="term" value="C:cytoplasm"/>
    <property type="evidence" value="ECO:0007669"/>
    <property type="project" value="UniProtKB-SubCell"/>
</dbReference>
<dbReference type="GO" id="GO:0009380">
    <property type="term" value="C:excinuclease repair complex"/>
    <property type="evidence" value="ECO:0007669"/>
    <property type="project" value="InterPro"/>
</dbReference>
<dbReference type="GO" id="GO:0005524">
    <property type="term" value="F:ATP binding"/>
    <property type="evidence" value="ECO:0007669"/>
    <property type="project" value="UniProtKB-UniRule"/>
</dbReference>
<dbReference type="GO" id="GO:0016887">
    <property type="term" value="F:ATP hydrolysis activity"/>
    <property type="evidence" value="ECO:0007669"/>
    <property type="project" value="InterPro"/>
</dbReference>
<dbReference type="GO" id="GO:0003677">
    <property type="term" value="F:DNA binding"/>
    <property type="evidence" value="ECO:0007669"/>
    <property type="project" value="UniProtKB-UniRule"/>
</dbReference>
<dbReference type="GO" id="GO:0009381">
    <property type="term" value="F:excinuclease ABC activity"/>
    <property type="evidence" value="ECO:0007669"/>
    <property type="project" value="UniProtKB-UniRule"/>
</dbReference>
<dbReference type="GO" id="GO:0008270">
    <property type="term" value="F:zinc ion binding"/>
    <property type="evidence" value="ECO:0007669"/>
    <property type="project" value="UniProtKB-UniRule"/>
</dbReference>
<dbReference type="GO" id="GO:0006289">
    <property type="term" value="P:nucleotide-excision repair"/>
    <property type="evidence" value="ECO:0007669"/>
    <property type="project" value="UniProtKB-UniRule"/>
</dbReference>
<dbReference type="GO" id="GO:0009432">
    <property type="term" value="P:SOS response"/>
    <property type="evidence" value="ECO:0007669"/>
    <property type="project" value="UniProtKB-UniRule"/>
</dbReference>
<dbReference type="CDD" id="cd03270">
    <property type="entry name" value="ABC_UvrA_I"/>
    <property type="match status" value="1"/>
</dbReference>
<dbReference type="CDD" id="cd03271">
    <property type="entry name" value="ABC_UvrA_II"/>
    <property type="match status" value="1"/>
</dbReference>
<dbReference type="FunFam" id="1.20.1580.10:FF:000002">
    <property type="entry name" value="UvrABC system protein A"/>
    <property type="match status" value="1"/>
</dbReference>
<dbReference type="Gene3D" id="1.10.8.280">
    <property type="entry name" value="ABC transporter ATPase domain-like"/>
    <property type="match status" value="1"/>
</dbReference>
<dbReference type="Gene3D" id="1.20.1580.10">
    <property type="entry name" value="ABC transporter ATPase like domain"/>
    <property type="match status" value="2"/>
</dbReference>
<dbReference type="Gene3D" id="3.30.1490.20">
    <property type="entry name" value="ATP-grasp fold, A domain"/>
    <property type="match status" value="1"/>
</dbReference>
<dbReference type="Gene3D" id="3.40.50.300">
    <property type="entry name" value="P-loop containing nucleotide triphosphate hydrolases"/>
    <property type="match status" value="2"/>
</dbReference>
<dbReference type="HAMAP" id="MF_00205">
    <property type="entry name" value="UvrA"/>
    <property type="match status" value="1"/>
</dbReference>
<dbReference type="InterPro" id="IPR003439">
    <property type="entry name" value="ABC_transporter-like_ATP-bd"/>
</dbReference>
<dbReference type="InterPro" id="IPR017871">
    <property type="entry name" value="ABC_transporter-like_CS"/>
</dbReference>
<dbReference type="InterPro" id="IPR013815">
    <property type="entry name" value="ATP_grasp_subdomain_1"/>
</dbReference>
<dbReference type="InterPro" id="IPR027417">
    <property type="entry name" value="P-loop_NTPase"/>
</dbReference>
<dbReference type="InterPro" id="IPR004602">
    <property type="entry name" value="UvrA"/>
</dbReference>
<dbReference type="InterPro" id="IPR041552">
    <property type="entry name" value="UvrA_DNA-bd"/>
</dbReference>
<dbReference type="InterPro" id="IPR041102">
    <property type="entry name" value="UvrA_inter"/>
</dbReference>
<dbReference type="NCBIfam" id="NF001503">
    <property type="entry name" value="PRK00349.1"/>
    <property type="match status" value="1"/>
</dbReference>
<dbReference type="NCBIfam" id="TIGR00630">
    <property type="entry name" value="uvra"/>
    <property type="match status" value="1"/>
</dbReference>
<dbReference type="PANTHER" id="PTHR43152">
    <property type="entry name" value="UVRABC SYSTEM PROTEIN A"/>
    <property type="match status" value="1"/>
</dbReference>
<dbReference type="PANTHER" id="PTHR43152:SF3">
    <property type="entry name" value="UVRABC SYSTEM PROTEIN A"/>
    <property type="match status" value="1"/>
</dbReference>
<dbReference type="Pfam" id="PF17755">
    <property type="entry name" value="UvrA_DNA-bind"/>
    <property type="match status" value="1"/>
</dbReference>
<dbReference type="Pfam" id="PF17760">
    <property type="entry name" value="UvrA_inter"/>
    <property type="match status" value="1"/>
</dbReference>
<dbReference type="SUPFAM" id="SSF52540">
    <property type="entry name" value="P-loop containing nucleoside triphosphate hydrolases"/>
    <property type="match status" value="2"/>
</dbReference>
<dbReference type="PROSITE" id="PS00211">
    <property type="entry name" value="ABC_TRANSPORTER_1"/>
    <property type="match status" value="2"/>
</dbReference>
<dbReference type="PROSITE" id="PS50893">
    <property type="entry name" value="ABC_TRANSPORTER_2"/>
    <property type="match status" value="1"/>
</dbReference>
<feature type="chain" id="PRO_0000093039" description="UvrABC system protein A">
    <location>
        <begin position="1"/>
        <end position="974"/>
    </location>
</feature>
<feature type="domain" description="ABC transporter 1" evidence="1">
    <location>
        <begin position="331"/>
        <end position="610"/>
    </location>
</feature>
<feature type="domain" description="ABC transporter 2" evidence="1">
    <location>
        <begin position="630"/>
        <end position="959"/>
    </location>
</feature>
<feature type="zinc finger region" description="C4-type" evidence="1">
    <location>
        <begin position="762"/>
        <end position="788"/>
    </location>
</feature>
<feature type="binding site" evidence="1">
    <location>
        <begin position="34"/>
        <end position="41"/>
    </location>
    <ligand>
        <name>ATP</name>
        <dbReference type="ChEBI" id="CHEBI:30616"/>
    </ligand>
</feature>
<feature type="binding site" evidence="1">
    <location>
        <begin position="663"/>
        <end position="670"/>
    </location>
    <ligand>
        <name>ATP</name>
        <dbReference type="ChEBI" id="CHEBI:30616"/>
    </ligand>
</feature>
<name>UVRA_BRUA2</name>
<comment type="function">
    <text evidence="1">The UvrABC repair system catalyzes the recognition and processing of DNA lesions. UvrA is an ATPase and a DNA-binding protein. A damage recognition complex composed of 2 UvrA and 2 UvrB subunits scans DNA for abnormalities. When the presence of a lesion has been verified by UvrB, the UvrA molecules dissociate.</text>
</comment>
<comment type="subunit">
    <text evidence="1">Forms a heterotetramer with UvrB during the search for lesions.</text>
</comment>
<comment type="subcellular location">
    <subcellularLocation>
        <location evidence="1">Cytoplasm</location>
    </subcellularLocation>
</comment>
<comment type="similarity">
    <text evidence="1">Belongs to the ABC transporter superfamily. UvrA family.</text>
</comment>
<reference key="1">
    <citation type="journal article" date="2005" name="Infect. Immun.">
        <title>Whole-genome analyses of speciation events in pathogenic Brucellae.</title>
        <authorList>
            <person name="Chain P.S."/>
            <person name="Comerci D.J."/>
            <person name="Tolmasky M.E."/>
            <person name="Larimer F.W."/>
            <person name="Malfatti S.A."/>
            <person name="Vergez L.M."/>
            <person name="Aguero F."/>
            <person name="Land M.L."/>
            <person name="Ugalde R.A."/>
            <person name="Garcia E."/>
        </authorList>
    </citation>
    <scope>NUCLEOTIDE SEQUENCE [LARGE SCALE GENOMIC DNA]</scope>
    <source>
        <strain>2308</strain>
    </source>
</reference>
<reference key="2">
    <citation type="journal article" date="1993" name="Infect. Immun.">
        <title>Isolation of Brucella abortus ssb and uvrA genes from a genomic library by use of lymphocytes as probes.</title>
        <authorList>
            <person name="Zhu Y."/>
            <person name="Oliveira S.C."/>
            <person name="Splitter G.A."/>
        </authorList>
    </citation>
    <scope>NUCLEOTIDE SEQUENCE [GENOMIC DNA] OF 1-227</scope>
</reference>
<sequence length="974" mass="107423">MSDQKFISIRGAREHNLKNVDLDLPRDKLIVMTGLSGSGKSSLAFDTIYAEGQRRYVESLSAYARQFLEMMQKPDVDQIDGLSPAISIEQKTTSRNPRSTVGTVTEIYDYMRLLFARVGIPYSPATGLPIESQTVSQMVDRVIALEEGTRLYILAPIVRGRKGEYRKELAELQKKGFQRVKVDGTFYEIADVPPLDKKYKHDIDVVVDRVVVRPDLSTRLADSLETCLKLADGLAIAEFADKPLPVGETAEGGSANKSANETHERILFSEKFACPVSGFTIPEIEPRLFSFNNPFGACPTCDGLGTQQAIDPNLIIPDESAALKDGAVAPWARSSSPYYNQTLEALGKAYGFKVSARWSELSEEARQAILYGTKGREITFHYDDGLRSYQTTKPFEGVIPNLERRWKETDSAWSREEIERFMASTPCPACNGYRLKPEALSVKIGKKHIGEITEMSIRKADAWFRDIDGSFNEKQREIAARILKAIRERLQFLNNVGLDYLTLARNSGTLSGGESQRIRLASQIGSGLTGVLYVLDEPSIGLHQRDNARLLDTLRHLRDLGNTVIVVEHDEDAILTADYVVDIGPAAGVHGGKVIAQGSPQDIMANTNSLTGKYLSGAMEVAVPAERRKISKTKRLRVVGARGNNLKNVSADIPLGTFTAVTGVSGGGKSTFLIETLFKAASRRIMGSREHPAEHDRIEGLEFLDKVIDIDQSPIGRTPRSNPATYTGAFTPIRDWFAGLPEAKARGYQPGRFSFNVKGGRCEACQGDGVIKIEMHFLPDVYVTCDVCHGKRYNRETLDVLFKGKSIADVLDMTVEEGAEFFSAVPAVRDKLETLVKVGLGYIKVGQQATTLSGGEAQRVKLAKELSRRATGRTLYILDEPTTGLHFHDVAKLLEVLHELVEQGNTVVVIEHNLEVIKTADWVIDLGPEGGDGGGEIVAVGRPEDIVQEKRSYTGQFLKELLERRPKRSSQAAE</sequence>
<evidence type="ECO:0000255" key="1">
    <source>
        <dbReference type="HAMAP-Rule" id="MF_00205"/>
    </source>
</evidence>
<accession>Q2YPX5</accession>
<accession>Q07433</accession>
<accession>Q57D33</accession>
<organism>
    <name type="scientific">Brucella abortus (strain 2308)</name>
    <dbReference type="NCBI Taxonomy" id="359391"/>
    <lineage>
        <taxon>Bacteria</taxon>
        <taxon>Pseudomonadati</taxon>
        <taxon>Pseudomonadota</taxon>
        <taxon>Alphaproteobacteria</taxon>
        <taxon>Hyphomicrobiales</taxon>
        <taxon>Brucellaceae</taxon>
        <taxon>Brucella/Ochrobactrum group</taxon>
        <taxon>Brucella</taxon>
    </lineage>
</organism>
<keyword id="KW-0067">ATP-binding</keyword>
<keyword id="KW-0963">Cytoplasm</keyword>
<keyword id="KW-0227">DNA damage</keyword>
<keyword id="KW-0228">DNA excision</keyword>
<keyword id="KW-0234">DNA repair</keyword>
<keyword id="KW-0238">DNA-binding</keyword>
<keyword id="KW-0267">Excision nuclease</keyword>
<keyword id="KW-0479">Metal-binding</keyword>
<keyword id="KW-0547">Nucleotide-binding</keyword>
<keyword id="KW-1185">Reference proteome</keyword>
<keyword id="KW-0677">Repeat</keyword>
<keyword id="KW-0742">SOS response</keyword>
<keyword id="KW-0862">Zinc</keyword>
<keyword id="KW-0863">Zinc-finger</keyword>
<protein>
    <recommendedName>
        <fullName evidence="1">UvrABC system protein A</fullName>
        <shortName evidence="1">UvrA protein</shortName>
    </recommendedName>
    <alternativeName>
        <fullName evidence="1">Excinuclease ABC subunit A</fullName>
    </alternativeName>
</protein>